<accession>Q72CE7</accession>
<sequence length="417" mass="45664">MSSNTGGSDRELRCSFCAKGQDEVKRLIAGPGVYICDECVALCNEIVAHEDAGEREEMDRLLTPAEIKARLDEYVIGQHQAKKILSVAVHNHYKRVFYAEALGGEVELEKSNILLIGPSGSGKTLLAKTLARVLKVPFAIADATTLTEAGYVGEDVENILVQLLQNADYDIEAAAKGIIYIDEIDKISRKGDGPSITRDVSGEGVQQALLKIIEGTEANIPPKGGRKHPQQEFIRMDTSNILFILGGAFIGLDKIVDQRSGGGSMGFGAKVSNRKDRPLGELLDQVHPNDLVKFGLIPEFIGRIPVVTHVDELGEEDLIRILTEPKNALVRQYQKLFELDKVTLRFTANALKSIASQAIERKTGARGLRNVMENVMLDIMYSLPTLEGVKECIINRAVVEKGREPVLIYDTEAKTGS</sequence>
<dbReference type="EMBL" id="AE017285">
    <property type="protein sequence ID" value="AAS95814.1"/>
    <property type="molecule type" value="Genomic_DNA"/>
</dbReference>
<dbReference type="RefSeq" id="WP_010938631.1">
    <property type="nucleotide sequence ID" value="NC_002937.3"/>
</dbReference>
<dbReference type="RefSeq" id="YP_010555.1">
    <property type="nucleotide sequence ID" value="NC_002937.3"/>
</dbReference>
<dbReference type="SMR" id="Q72CE7"/>
<dbReference type="IntAct" id="Q72CE7">
    <property type="interactions" value="1"/>
</dbReference>
<dbReference type="STRING" id="882.DVU_1336"/>
<dbReference type="PaxDb" id="882-DVU_1336"/>
<dbReference type="EnsemblBacteria" id="AAS95814">
    <property type="protein sequence ID" value="AAS95814"/>
    <property type="gene ID" value="DVU_1336"/>
</dbReference>
<dbReference type="KEGG" id="dvu:DVU_1336"/>
<dbReference type="PATRIC" id="fig|882.5.peg.1247"/>
<dbReference type="eggNOG" id="COG1219">
    <property type="taxonomic scope" value="Bacteria"/>
</dbReference>
<dbReference type="HOGENOM" id="CLU_014218_8_2_7"/>
<dbReference type="OrthoDB" id="9804062at2"/>
<dbReference type="PhylomeDB" id="Q72CE7"/>
<dbReference type="Proteomes" id="UP000002194">
    <property type="component" value="Chromosome"/>
</dbReference>
<dbReference type="GO" id="GO:0009376">
    <property type="term" value="C:HslUV protease complex"/>
    <property type="evidence" value="ECO:0007669"/>
    <property type="project" value="TreeGrafter"/>
</dbReference>
<dbReference type="GO" id="GO:0005524">
    <property type="term" value="F:ATP binding"/>
    <property type="evidence" value="ECO:0007669"/>
    <property type="project" value="UniProtKB-UniRule"/>
</dbReference>
<dbReference type="GO" id="GO:0016887">
    <property type="term" value="F:ATP hydrolysis activity"/>
    <property type="evidence" value="ECO:0007669"/>
    <property type="project" value="InterPro"/>
</dbReference>
<dbReference type="GO" id="GO:0140662">
    <property type="term" value="F:ATP-dependent protein folding chaperone"/>
    <property type="evidence" value="ECO:0007669"/>
    <property type="project" value="InterPro"/>
</dbReference>
<dbReference type="GO" id="GO:0046983">
    <property type="term" value="F:protein dimerization activity"/>
    <property type="evidence" value="ECO:0007669"/>
    <property type="project" value="InterPro"/>
</dbReference>
<dbReference type="GO" id="GO:0051082">
    <property type="term" value="F:unfolded protein binding"/>
    <property type="evidence" value="ECO:0007669"/>
    <property type="project" value="UniProtKB-UniRule"/>
</dbReference>
<dbReference type="GO" id="GO:0008270">
    <property type="term" value="F:zinc ion binding"/>
    <property type="evidence" value="ECO:0007669"/>
    <property type="project" value="InterPro"/>
</dbReference>
<dbReference type="GO" id="GO:0051301">
    <property type="term" value="P:cell division"/>
    <property type="evidence" value="ECO:0007669"/>
    <property type="project" value="TreeGrafter"/>
</dbReference>
<dbReference type="GO" id="GO:0051603">
    <property type="term" value="P:proteolysis involved in protein catabolic process"/>
    <property type="evidence" value="ECO:0007669"/>
    <property type="project" value="TreeGrafter"/>
</dbReference>
<dbReference type="CDD" id="cd19497">
    <property type="entry name" value="RecA-like_ClpX"/>
    <property type="match status" value="1"/>
</dbReference>
<dbReference type="FunFam" id="1.10.8.60:FF:000002">
    <property type="entry name" value="ATP-dependent Clp protease ATP-binding subunit ClpX"/>
    <property type="match status" value="1"/>
</dbReference>
<dbReference type="FunFam" id="3.40.50.300:FF:000005">
    <property type="entry name" value="ATP-dependent Clp protease ATP-binding subunit ClpX"/>
    <property type="match status" value="1"/>
</dbReference>
<dbReference type="Gene3D" id="1.10.8.60">
    <property type="match status" value="1"/>
</dbReference>
<dbReference type="Gene3D" id="6.20.220.10">
    <property type="entry name" value="ClpX chaperone, C4-type zinc finger domain"/>
    <property type="match status" value="1"/>
</dbReference>
<dbReference type="Gene3D" id="3.40.50.300">
    <property type="entry name" value="P-loop containing nucleotide triphosphate hydrolases"/>
    <property type="match status" value="1"/>
</dbReference>
<dbReference type="HAMAP" id="MF_00175">
    <property type="entry name" value="ClpX"/>
    <property type="match status" value="1"/>
</dbReference>
<dbReference type="InterPro" id="IPR003593">
    <property type="entry name" value="AAA+_ATPase"/>
</dbReference>
<dbReference type="InterPro" id="IPR050052">
    <property type="entry name" value="ATP-dep_Clp_protease_ClpX"/>
</dbReference>
<dbReference type="InterPro" id="IPR003959">
    <property type="entry name" value="ATPase_AAA_core"/>
</dbReference>
<dbReference type="InterPro" id="IPR019489">
    <property type="entry name" value="Clp_ATPase_C"/>
</dbReference>
<dbReference type="InterPro" id="IPR004487">
    <property type="entry name" value="Clp_protease_ATP-bd_su_ClpX"/>
</dbReference>
<dbReference type="InterPro" id="IPR046425">
    <property type="entry name" value="ClpX_bact"/>
</dbReference>
<dbReference type="InterPro" id="IPR027417">
    <property type="entry name" value="P-loop_NTPase"/>
</dbReference>
<dbReference type="InterPro" id="IPR010603">
    <property type="entry name" value="Znf_CppX_C4"/>
</dbReference>
<dbReference type="InterPro" id="IPR038366">
    <property type="entry name" value="Znf_CppX_C4_sf"/>
</dbReference>
<dbReference type="NCBIfam" id="TIGR00382">
    <property type="entry name" value="clpX"/>
    <property type="match status" value="1"/>
</dbReference>
<dbReference type="NCBIfam" id="NF003745">
    <property type="entry name" value="PRK05342.1"/>
    <property type="match status" value="1"/>
</dbReference>
<dbReference type="PANTHER" id="PTHR48102:SF7">
    <property type="entry name" value="ATP-DEPENDENT CLP PROTEASE ATP-BINDING SUBUNIT CLPX-LIKE, MITOCHONDRIAL"/>
    <property type="match status" value="1"/>
</dbReference>
<dbReference type="PANTHER" id="PTHR48102">
    <property type="entry name" value="ATP-DEPENDENT CLP PROTEASE ATP-BINDING SUBUNIT CLPX-LIKE, MITOCHONDRIAL-RELATED"/>
    <property type="match status" value="1"/>
</dbReference>
<dbReference type="Pfam" id="PF07724">
    <property type="entry name" value="AAA_2"/>
    <property type="match status" value="1"/>
</dbReference>
<dbReference type="Pfam" id="PF10431">
    <property type="entry name" value="ClpB_D2-small"/>
    <property type="match status" value="1"/>
</dbReference>
<dbReference type="Pfam" id="PF06689">
    <property type="entry name" value="zf-C4_ClpX"/>
    <property type="match status" value="1"/>
</dbReference>
<dbReference type="SMART" id="SM00382">
    <property type="entry name" value="AAA"/>
    <property type="match status" value="1"/>
</dbReference>
<dbReference type="SMART" id="SM01086">
    <property type="entry name" value="ClpB_D2-small"/>
    <property type="match status" value="1"/>
</dbReference>
<dbReference type="SMART" id="SM00994">
    <property type="entry name" value="zf-C4_ClpX"/>
    <property type="match status" value="1"/>
</dbReference>
<dbReference type="SUPFAM" id="SSF57716">
    <property type="entry name" value="Glucocorticoid receptor-like (DNA-binding domain)"/>
    <property type="match status" value="1"/>
</dbReference>
<dbReference type="SUPFAM" id="SSF52540">
    <property type="entry name" value="P-loop containing nucleoside triphosphate hydrolases"/>
    <property type="match status" value="1"/>
</dbReference>
<dbReference type="PROSITE" id="PS51902">
    <property type="entry name" value="CLPX_ZB"/>
    <property type="match status" value="1"/>
</dbReference>
<evidence type="ECO:0000255" key="1">
    <source>
        <dbReference type="HAMAP-Rule" id="MF_00175"/>
    </source>
</evidence>
<evidence type="ECO:0000255" key="2">
    <source>
        <dbReference type="PROSITE-ProRule" id="PRU01250"/>
    </source>
</evidence>
<name>CLPX_NITV2</name>
<proteinExistence type="inferred from homology"/>
<reference key="1">
    <citation type="journal article" date="2004" name="Nat. Biotechnol.">
        <title>The genome sequence of the anaerobic, sulfate-reducing bacterium Desulfovibrio vulgaris Hildenborough.</title>
        <authorList>
            <person name="Heidelberg J.F."/>
            <person name="Seshadri R."/>
            <person name="Haveman S.A."/>
            <person name="Hemme C.L."/>
            <person name="Paulsen I.T."/>
            <person name="Kolonay J.F."/>
            <person name="Eisen J.A."/>
            <person name="Ward N.L."/>
            <person name="Methe B.A."/>
            <person name="Brinkac L.M."/>
            <person name="Daugherty S.C."/>
            <person name="DeBoy R.T."/>
            <person name="Dodson R.J."/>
            <person name="Durkin A.S."/>
            <person name="Madupu R."/>
            <person name="Nelson W.C."/>
            <person name="Sullivan S.A."/>
            <person name="Fouts D.E."/>
            <person name="Haft D.H."/>
            <person name="Selengut J."/>
            <person name="Peterson J.D."/>
            <person name="Davidsen T.M."/>
            <person name="Zafar N."/>
            <person name="Zhou L."/>
            <person name="Radune D."/>
            <person name="Dimitrov G."/>
            <person name="Hance M."/>
            <person name="Tran K."/>
            <person name="Khouri H.M."/>
            <person name="Gill J."/>
            <person name="Utterback T.R."/>
            <person name="Feldblyum T.V."/>
            <person name="Wall J.D."/>
            <person name="Voordouw G."/>
            <person name="Fraser C.M."/>
        </authorList>
    </citation>
    <scope>NUCLEOTIDE SEQUENCE [LARGE SCALE GENOMIC DNA]</scope>
    <source>
        <strain>ATCC 29579 / DSM 644 / CCUG 34227 / NCIMB 8303 / VKM B-1760 / Hildenborough</strain>
    </source>
</reference>
<comment type="function">
    <text evidence="1">ATP-dependent specificity component of the Clp protease. It directs the protease to specific substrates. Can perform chaperone functions in the absence of ClpP.</text>
</comment>
<comment type="subunit">
    <text evidence="1">Component of the ClpX-ClpP complex. Forms a hexameric ring that, in the presence of ATP, binds to fourteen ClpP subunits assembled into a disk-like structure with a central cavity, resembling the structure of eukaryotic proteasomes.</text>
</comment>
<comment type="similarity">
    <text evidence="1">Belongs to the ClpX chaperone family.</text>
</comment>
<protein>
    <recommendedName>
        <fullName evidence="1">ATP-dependent Clp protease ATP-binding subunit ClpX</fullName>
    </recommendedName>
</protein>
<organism>
    <name type="scientific">Nitratidesulfovibrio vulgaris (strain ATCC 29579 / DSM 644 / CCUG 34227 / NCIMB 8303 / VKM B-1760 / Hildenborough)</name>
    <name type="common">Desulfovibrio vulgaris</name>
    <dbReference type="NCBI Taxonomy" id="882"/>
    <lineage>
        <taxon>Bacteria</taxon>
        <taxon>Pseudomonadati</taxon>
        <taxon>Thermodesulfobacteriota</taxon>
        <taxon>Desulfovibrionia</taxon>
        <taxon>Desulfovibrionales</taxon>
        <taxon>Desulfovibrionaceae</taxon>
        <taxon>Nitratidesulfovibrio</taxon>
    </lineage>
</organism>
<feature type="chain" id="PRO_0000160351" description="ATP-dependent Clp protease ATP-binding subunit ClpX">
    <location>
        <begin position="1"/>
        <end position="417"/>
    </location>
</feature>
<feature type="domain" description="ClpX-type ZB" evidence="2">
    <location>
        <begin position="2"/>
        <end position="55"/>
    </location>
</feature>
<feature type="binding site" evidence="2">
    <location>
        <position position="14"/>
    </location>
    <ligand>
        <name>Zn(2+)</name>
        <dbReference type="ChEBI" id="CHEBI:29105"/>
    </ligand>
</feature>
<feature type="binding site" evidence="2">
    <location>
        <position position="17"/>
    </location>
    <ligand>
        <name>Zn(2+)</name>
        <dbReference type="ChEBI" id="CHEBI:29105"/>
    </ligand>
</feature>
<feature type="binding site" evidence="2">
    <location>
        <position position="36"/>
    </location>
    <ligand>
        <name>Zn(2+)</name>
        <dbReference type="ChEBI" id="CHEBI:29105"/>
    </ligand>
</feature>
<feature type="binding site" evidence="2">
    <location>
        <position position="39"/>
    </location>
    <ligand>
        <name>Zn(2+)</name>
        <dbReference type="ChEBI" id="CHEBI:29105"/>
    </ligand>
</feature>
<feature type="binding site" evidence="1">
    <location>
        <begin position="118"/>
        <end position="125"/>
    </location>
    <ligand>
        <name>ATP</name>
        <dbReference type="ChEBI" id="CHEBI:30616"/>
    </ligand>
</feature>
<keyword id="KW-0067">ATP-binding</keyword>
<keyword id="KW-0143">Chaperone</keyword>
<keyword id="KW-0479">Metal-binding</keyword>
<keyword id="KW-0547">Nucleotide-binding</keyword>
<keyword id="KW-1185">Reference proteome</keyword>
<keyword id="KW-0862">Zinc</keyword>
<gene>
    <name evidence="1" type="primary">clpX</name>
    <name type="ordered locus">DVU_1336</name>
</gene>